<organism>
    <name type="scientific">Bacillus anthracis</name>
    <dbReference type="NCBI Taxonomy" id="1392"/>
    <lineage>
        <taxon>Bacteria</taxon>
        <taxon>Bacillati</taxon>
        <taxon>Bacillota</taxon>
        <taxon>Bacilli</taxon>
        <taxon>Bacillales</taxon>
        <taxon>Bacillaceae</taxon>
        <taxon>Bacillus</taxon>
        <taxon>Bacillus cereus group</taxon>
    </lineage>
</organism>
<name>RL5_BACAN</name>
<reference key="1">
    <citation type="journal article" date="2003" name="Nature">
        <title>The genome sequence of Bacillus anthracis Ames and comparison to closely related bacteria.</title>
        <authorList>
            <person name="Read T.D."/>
            <person name="Peterson S.N."/>
            <person name="Tourasse N.J."/>
            <person name="Baillie L.W."/>
            <person name="Paulsen I.T."/>
            <person name="Nelson K.E."/>
            <person name="Tettelin H."/>
            <person name="Fouts D.E."/>
            <person name="Eisen J.A."/>
            <person name="Gill S.R."/>
            <person name="Holtzapple E.K."/>
            <person name="Okstad O.A."/>
            <person name="Helgason E."/>
            <person name="Rilstone J."/>
            <person name="Wu M."/>
            <person name="Kolonay J.F."/>
            <person name="Beanan M.J."/>
            <person name="Dodson R.J."/>
            <person name="Brinkac L.M."/>
            <person name="Gwinn M.L."/>
            <person name="DeBoy R.T."/>
            <person name="Madpu R."/>
            <person name="Daugherty S.C."/>
            <person name="Durkin A.S."/>
            <person name="Haft D.H."/>
            <person name="Nelson W.C."/>
            <person name="Peterson J.D."/>
            <person name="Pop M."/>
            <person name="Khouri H.M."/>
            <person name="Radune D."/>
            <person name="Benton J.L."/>
            <person name="Mahamoud Y."/>
            <person name="Jiang L."/>
            <person name="Hance I.R."/>
            <person name="Weidman J.F."/>
            <person name="Berry K.J."/>
            <person name="Plaut R.D."/>
            <person name="Wolf A.M."/>
            <person name="Watkins K.L."/>
            <person name="Nierman W.C."/>
            <person name="Hazen A."/>
            <person name="Cline R.T."/>
            <person name="Redmond C."/>
            <person name="Thwaite J.E."/>
            <person name="White O."/>
            <person name="Salzberg S.L."/>
            <person name="Thomason B."/>
            <person name="Friedlander A.M."/>
            <person name="Koehler T.M."/>
            <person name="Hanna P.C."/>
            <person name="Kolstoe A.-B."/>
            <person name="Fraser C.M."/>
        </authorList>
    </citation>
    <scope>NUCLEOTIDE SEQUENCE [LARGE SCALE GENOMIC DNA]</scope>
    <source>
        <strain>Ames / isolate Porton</strain>
    </source>
</reference>
<reference key="2">
    <citation type="journal article" date="2009" name="J. Bacteriol.">
        <title>The complete genome sequence of Bacillus anthracis Ames 'Ancestor'.</title>
        <authorList>
            <person name="Ravel J."/>
            <person name="Jiang L."/>
            <person name="Stanley S.T."/>
            <person name="Wilson M.R."/>
            <person name="Decker R.S."/>
            <person name="Read T.D."/>
            <person name="Worsham P."/>
            <person name="Keim P.S."/>
            <person name="Salzberg S.L."/>
            <person name="Fraser-Liggett C.M."/>
            <person name="Rasko D.A."/>
        </authorList>
    </citation>
    <scope>NUCLEOTIDE SEQUENCE [LARGE SCALE GENOMIC DNA]</scope>
    <source>
        <strain>Ames ancestor</strain>
    </source>
</reference>
<reference key="3">
    <citation type="submission" date="2004-01" db="EMBL/GenBank/DDBJ databases">
        <title>Complete genome sequence of Bacillus anthracis Sterne.</title>
        <authorList>
            <person name="Brettin T.S."/>
            <person name="Bruce D."/>
            <person name="Challacombe J.F."/>
            <person name="Gilna P."/>
            <person name="Han C."/>
            <person name="Hill K."/>
            <person name="Hitchcock P."/>
            <person name="Jackson P."/>
            <person name="Keim P."/>
            <person name="Longmire J."/>
            <person name="Lucas S."/>
            <person name="Okinaka R."/>
            <person name="Richardson P."/>
            <person name="Rubin E."/>
            <person name="Tice H."/>
        </authorList>
    </citation>
    <scope>NUCLEOTIDE SEQUENCE [LARGE SCALE GENOMIC DNA]</scope>
    <source>
        <strain>Sterne</strain>
    </source>
</reference>
<comment type="function">
    <text evidence="1">This is one of the proteins that bind and probably mediate the attachment of the 5S RNA into the large ribosomal subunit, where it forms part of the central protuberance. In the 70S ribosome it contacts protein S13 of the 30S subunit (bridge B1b), connecting the 2 subunits; this bridge is implicated in subunit movement. Contacts the P site tRNA; the 5S rRNA and some of its associated proteins might help stabilize positioning of ribosome-bound tRNAs (By similarity).</text>
</comment>
<comment type="subunit">
    <text evidence="1">Part of the 50S ribosomal subunit; part of the 5S rRNA/L5/L18/L25 subcomplex. Contacts the 5S rRNA and the P site tRNA. Forms a bridge to the 30S subunit in the 70S ribosome (By similarity).</text>
</comment>
<comment type="similarity">
    <text evidence="2">Belongs to the universal ribosomal protein uL5 family.</text>
</comment>
<feature type="chain" id="PRO_0000124887" description="Large ribosomal subunit protein uL5">
    <location>
        <begin position="1"/>
        <end position="179"/>
    </location>
</feature>
<proteinExistence type="inferred from homology"/>
<gene>
    <name type="primary">rplE</name>
    <name type="ordered locus">BA_0122</name>
    <name type="ordered locus">GBAA_0122</name>
    <name type="ordered locus">BAS0122</name>
</gene>
<sequence length="179" mass="20196">MNRLKEKFQKEITPALVSKFNYKSVMQVPKIEKIVINTGVGDAVSNSKTLDNAVEELTQITGQKPVVTRAKKSIAGFRLREGMPIGAKVTLRGEQMYEFFDKLVSVSLPRVRDFRGVSKKSFDGRGNYTLGVKEQLIFPEIDYDKVSKVRGMDIVIVTTAKTDEEARELLTQFGMPFQK</sequence>
<evidence type="ECO:0000250" key="1"/>
<evidence type="ECO:0000305" key="2"/>
<keyword id="KW-1185">Reference proteome</keyword>
<keyword id="KW-0687">Ribonucleoprotein</keyword>
<keyword id="KW-0689">Ribosomal protein</keyword>
<keyword id="KW-0694">RNA-binding</keyword>
<keyword id="KW-0699">rRNA-binding</keyword>
<keyword id="KW-0820">tRNA-binding</keyword>
<protein>
    <recommendedName>
        <fullName evidence="2">Large ribosomal subunit protein uL5</fullName>
    </recommendedName>
    <alternativeName>
        <fullName>50S ribosomal protein L5</fullName>
    </alternativeName>
</protein>
<accession>Q81VR8</accession>
<accession>Q6I4S2</accession>
<accession>Q6KYG8</accession>
<dbReference type="EMBL" id="AE016879">
    <property type="protein sequence ID" value="AAP24176.1"/>
    <property type="molecule type" value="Genomic_DNA"/>
</dbReference>
<dbReference type="EMBL" id="AE017334">
    <property type="protein sequence ID" value="AAT29202.1"/>
    <property type="molecule type" value="Genomic_DNA"/>
</dbReference>
<dbReference type="EMBL" id="AE017225">
    <property type="protein sequence ID" value="AAT52459.1"/>
    <property type="molecule type" value="Genomic_DNA"/>
</dbReference>
<dbReference type="RefSeq" id="NP_842690.1">
    <property type="nucleotide sequence ID" value="NC_003997.3"/>
</dbReference>
<dbReference type="RefSeq" id="WP_001080834.1">
    <property type="nucleotide sequence ID" value="NZ_WXXJ01000051.1"/>
</dbReference>
<dbReference type="RefSeq" id="YP_026408.1">
    <property type="nucleotide sequence ID" value="NC_005945.1"/>
</dbReference>
<dbReference type="SMR" id="Q81VR8"/>
<dbReference type="STRING" id="261594.GBAA_0122"/>
<dbReference type="DNASU" id="1087325"/>
<dbReference type="GeneID" id="45020167"/>
<dbReference type="KEGG" id="ban:BA_0122"/>
<dbReference type="KEGG" id="banh:HYU01_00665"/>
<dbReference type="KEGG" id="bar:GBAA_0122"/>
<dbReference type="KEGG" id="bat:BAS0122"/>
<dbReference type="PATRIC" id="fig|198094.11.peg.119"/>
<dbReference type="eggNOG" id="COG0094">
    <property type="taxonomic scope" value="Bacteria"/>
</dbReference>
<dbReference type="HOGENOM" id="CLU_061015_2_1_9"/>
<dbReference type="OMA" id="PIGCAVT"/>
<dbReference type="OrthoDB" id="9806626at2"/>
<dbReference type="Proteomes" id="UP000000427">
    <property type="component" value="Chromosome"/>
</dbReference>
<dbReference type="Proteomes" id="UP000000594">
    <property type="component" value="Chromosome"/>
</dbReference>
<dbReference type="GO" id="GO:1990904">
    <property type="term" value="C:ribonucleoprotein complex"/>
    <property type="evidence" value="ECO:0007669"/>
    <property type="project" value="UniProtKB-KW"/>
</dbReference>
<dbReference type="GO" id="GO:0005840">
    <property type="term" value="C:ribosome"/>
    <property type="evidence" value="ECO:0007669"/>
    <property type="project" value="UniProtKB-KW"/>
</dbReference>
<dbReference type="GO" id="GO:0019843">
    <property type="term" value="F:rRNA binding"/>
    <property type="evidence" value="ECO:0007669"/>
    <property type="project" value="UniProtKB-UniRule"/>
</dbReference>
<dbReference type="GO" id="GO:0003735">
    <property type="term" value="F:structural constituent of ribosome"/>
    <property type="evidence" value="ECO:0007669"/>
    <property type="project" value="InterPro"/>
</dbReference>
<dbReference type="GO" id="GO:0000049">
    <property type="term" value="F:tRNA binding"/>
    <property type="evidence" value="ECO:0007669"/>
    <property type="project" value="UniProtKB-UniRule"/>
</dbReference>
<dbReference type="GO" id="GO:0006412">
    <property type="term" value="P:translation"/>
    <property type="evidence" value="ECO:0007669"/>
    <property type="project" value="UniProtKB-UniRule"/>
</dbReference>
<dbReference type="FunFam" id="3.30.1440.10:FF:000001">
    <property type="entry name" value="50S ribosomal protein L5"/>
    <property type="match status" value="1"/>
</dbReference>
<dbReference type="Gene3D" id="3.30.1440.10">
    <property type="match status" value="1"/>
</dbReference>
<dbReference type="HAMAP" id="MF_01333_B">
    <property type="entry name" value="Ribosomal_uL5_B"/>
    <property type="match status" value="1"/>
</dbReference>
<dbReference type="InterPro" id="IPR002132">
    <property type="entry name" value="Ribosomal_uL5"/>
</dbReference>
<dbReference type="InterPro" id="IPR020930">
    <property type="entry name" value="Ribosomal_uL5_bac-type"/>
</dbReference>
<dbReference type="InterPro" id="IPR031309">
    <property type="entry name" value="Ribosomal_uL5_C"/>
</dbReference>
<dbReference type="InterPro" id="IPR020929">
    <property type="entry name" value="Ribosomal_uL5_CS"/>
</dbReference>
<dbReference type="InterPro" id="IPR022803">
    <property type="entry name" value="Ribosomal_uL5_dom_sf"/>
</dbReference>
<dbReference type="InterPro" id="IPR031310">
    <property type="entry name" value="Ribosomal_uL5_N"/>
</dbReference>
<dbReference type="NCBIfam" id="NF000585">
    <property type="entry name" value="PRK00010.1"/>
    <property type="match status" value="1"/>
</dbReference>
<dbReference type="PANTHER" id="PTHR11994">
    <property type="entry name" value="60S RIBOSOMAL PROTEIN L11-RELATED"/>
    <property type="match status" value="1"/>
</dbReference>
<dbReference type="Pfam" id="PF00281">
    <property type="entry name" value="Ribosomal_L5"/>
    <property type="match status" value="1"/>
</dbReference>
<dbReference type="Pfam" id="PF00673">
    <property type="entry name" value="Ribosomal_L5_C"/>
    <property type="match status" value="1"/>
</dbReference>
<dbReference type="PIRSF" id="PIRSF002161">
    <property type="entry name" value="Ribosomal_L5"/>
    <property type="match status" value="1"/>
</dbReference>
<dbReference type="SUPFAM" id="SSF55282">
    <property type="entry name" value="RL5-like"/>
    <property type="match status" value="1"/>
</dbReference>
<dbReference type="PROSITE" id="PS00358">
    <property type="entry name" value="RIBOSOMAL_L5"/>
    <property type="match status" value="1"/>
</dbReference>